<dbReference type="EMBL" id="AB188286">
    <property type="protein sequence ID" value="BAD74037.1"/>
    <property type="molecule type" value="mRNA"/>
</dbReference>
<dbReference type="RefSeq" id="NP_001009103.2">
    <property type="nucleotide sequence ID" value="NM_001009103.2"/>
</dbReference>
<dbReference type="RefSeq" id="NP_001184050.1">
    <property type="nucleotide sequence ID" value="NM_001197121.1"/>
</dbReference>
<dbReference type="SMR" id="Q5R1W1"/>
<dbReference type="FunCoup" id="Q5R1W1">
    <property type="interactions" value="1805"/>
</dbReference>
<dbReference type="STRING" id="9598.ENSPTRP00000032597"/>
<dbReference type="PaxDb" id="9598-ENSPTRP00000054670"/>
<dbReference type="GeneID" id="463349"/>
<dbReference type="KEGG" id="ptr:463349"/>
<dbReference type="CTD" id="989"/>
<dbReference type="eggNOG" id="KOG2655">
    <property type="taxonomic scope" value="Eukaryota"/>
</dbReference>
<dbReference type="InParanoid" id="Q5R1W1"/>
<dbReference type="OrthoDB" id="9372at9604"/>
<dbReference type="Proteomes" id="UP000002277">
    <property type="component" value="Unplaced"/>
</dbReference>
<dbReference type="GO" id="GO:0005930">
    <property type="term" value="C:axoneme"/>
    <property type="evidence" value="ECO:0000250"/>
    <property type="project" value="UniProtKB"/>
</dbReference>
<dbReference type="GO" id="GO:0032153">
    <property type="term" value="C:cell division site"/>
    <property type="evidence" value="ECO:0000318"/>
    <property type="project" value="GO_Central"/>
</dbReference>
<dbReference type="GO" id="GO:0032154">
    <property type="term" value="C:cleavage furrow"/>
    <property type="evidence" value="ECO:0007669"/>
    <property type="project" value="UniProtKB-SubCell"/>
</dbReference>
<dbReference type="GO" id="GO:0000776">
    <property type="term" value="C:kinetochore"/>
    <property type="evidence" value="ECO:0007669"/>
    <property type="project" value="UniProtKB-KW"/>
</dbReference>
<dbReference type="GO" id="GO:0015630">
    <property type="term" value="C:microtubule cytoskeleton"/>
    <property type="evidence" value="ECO:0000318"/>
    <property type="project" value="GO_Central"/>
</dbReference>
<dbReference type="GO" id="GO:0030496">
    <property type="term" value="C:midbody"/>
    <property type="evidence" value="ECO:0007669"/>
    <property type="project" value="UniProtKB-SubCell"/>
</dbReference>
<dbReference type="GO" id="GO:0031514">
    <property type="term" value="C:motile cilium"/>
    <property type="evidence" value="ECO:0007669"/>
    <property type="project" value="UniProtKB-SubCell"/>
</dbReference>
<dbReference type="GO" id="GO:0031105">
    <property type="term" value="C:septin complex"/>
    <property type="evidence" value="ECO:0000250"/>
    <property type="project" value="UniProtKB"/>
</dbReference>
<dbReference type="GO" id="GO:0005940">
    <property type="term" value="C:septin ring"/>
    <property type="evidence" value="ECO:0000318"/>
    <property type="project" value="GO_Central"/>
</dbReference>
<dbReference type="GO" id="GO:0005819">
    <property type="term" value="C:spindle"/>
    <property type="evidence" value="ECO:0007669"/>
    <property type="project" value="UniProtKB-SubCell"/>
</dbReference>
<dbReference type="GO" id="GO:0005525">
    <property type="term" value="F:GTP binding"/>
    <property type="evidence" value="ECO:0007669"/>
    <property type="project" value="UniProtKB-KW"/>
</dbReference>
<dbReference type="GO" id="GO:0003924">
    <property type="term" value="F:GTPase activity"/>
    <property type="evidence" value="ECO:0000318"/>
    <property type="project" value="GO_Central"/>
</dbReference>
<dbReference type="GO" id="GO:0060090">
    <property type="term" value="F:molecular adaptor activity"/>
    <property type="evidence" value="ECO:0000318"/>
    <property type="project" value="GO_Central"/>
</dbReference>
<dbReference type="GO" id="GO:0030154">
    <property type="term" value="P:cell differentiation"/>
    <property type="evidence" value="ECO:0007669"/>
    <property type="project" value="UniProtKB-KW"/>
</dbReference>
<dbReference type="GO" id="GO:0060271">
    <property type="term" value="P:cilium assembly"/>
    <property type="evidence" value="ECO:0000250"/>
    <property type="project" value="UniProtKB"/>
</dbReference>
<dbReference type="GO" id="GO:0061640">
    <property type="term" value="P:cytoskeleton-dependent cytokinesis"/>
    <property type="evidence" value="ECO:0000318"/>
    <property type="project" value="GO_Central"/>
</dbReference>
<dbReference type="GO" id="GO:0008104">
    <property type="term" value="P:protein localization"/>
    <property type="evidence" value="ECO:0000318"/>
    <property type="project" value="GO_Central"/>
</dbReference>
<dbReference type="GO" id="GO:0016476">
    <property type="term" value="P:regulation of embryonic cell shape"/>
    <property type="evidence" value="ECO:0000250"/>
    <property type="project" value="UniProtKB"/>
</dbReference>
<dbReference type="GO" id="GO:0007283">
    <property type="term" value="P:spermatogenesis"/>
    <property type="evidence" value="ECO:0007669"/>
    <property type="project" value="UniProtKB-KW"/>
</dbReference>
<dbReference type="CDD" id="cd01850">
    <property type="entry name" value="CDC_Septin"/>
    <property type="match status" value="1"/>
</dbReference>
<dbReference type="FunFam" id="3.40.50.300:FF:000162">
    <property type="entry name" value="septin-7 isoform X1"/>
    <property type="match status" value="1"/>
</dbReference>
<dbReference type="Gene3D" id="3.40.50.300">
    <property type="entry name" value="P-loop containing nucleotide triphosphate hydrolases"/>
    <property type="match status" value="1"/>
</dbReference>
<dbReference type="InterPro" id="IPR030379">
    <property type="entry name" value="G_SEPTIN_dom"/>
</dbReference>
<dbReference type="InterPro" id="IPR027417">
    <property type="entry name" value="P-loop_NTPase"/>
</dbReference>
<dbReference type="InterPro" id="IPR016491">
    <property type="entry name" value="Septin"/>
</dbReference>
<dbReference type="InterPro" id="IPR008115">
    <property type="entry name" value="Septin7"/>
</dbReference>
<dbReference type="PANTHER" id="PTHR18884">
    <property type="entry name" value="SEPTIN"/>
    <property type="match status" value="1"/>
</dbReference>
<dbReference type="Pfam" id="PF00735">
    <property type="entry name" value="Septin"/>
    <property type="match status" value="1"/>
</dbReference>
<dbReference type="PIRSF" id="PIRSF006698">
    <property type="entry name" value="Septin"/>
    <property type="match status" value="1"/>
</dbReference>
<dbReference type="PRINTS" id="PR01742">
    <property type="entry name" value="SEPTIN7"/>
</dbReference>
<dbReference type="SUPFAM" id="SSF52540">
    <property type="entry name" value="P-loop containing nucleoside triphosphate hydrolases"/>
    <property type="match status" value="1"/>
</dbReference>
<dbReference type="PROSITE" id="PS51719">
    <property type="entry name" value="G_SEPTIN"/>
    <property type="match status" value="1"/>
</dbReference>
<comment type="function">
    <text evidence="1 3">Filament-forming cytoskeletal GTPase. Required for normal organization of the actin cytoskeleton. Required for normal progress through mitosis. Involved in cytokinesis. Required for normal association of CENPE with the kinetochore. Plays a role in ciliogenesis and collective cell movements. Forms a filamentous structure with SEPTIN12, SEPTIN6, SEPTIN2 and probably SEPTIN4 at the sperm annulus which is required for the structural integrity and motility of the sperm tail during postmeiotic differentiation (By similarity).</text>
</comment>
<comment type="subunit">
    <text evidence="1 3">Septins polymerize into heterooligomeric protein complexes that form filaments, and associate with cellular membranes, actin filaments and microtubules. GTPase activity is required for filament formation. Filaments are assembled from asymmetrical heterotrimers, composed of SEPTIN2, SEPTIN6 and SEPTIN7 that associate head-to-head to form a hexameric unit. Within the trimer, directly interacts with SEPTIN6, while interaction with SEPTIN2 seems indirect. In the absence of SEPTIN6, forms homodimers. Interacts directly with CENPE and links CENPE to septin filaments composed of SEPTIN2, SEPTIN6 and SEPTIN7. Interacts with SEPTIN5, SEPTIN8, SEPTIN9 and SEPTIN11. Component of a septin core octameric complex consisting of SEPTIN12, SEPTIN7, SEPTIN6 and SEPTIN2 or SEPTIN4 in the order 12-7-6-2-2-6-7-12 or 12-7-6-4-4-6-7-12 and located in the sperm annulus; the SEPTIN12:SEPTIN7 association is mediated by the respective GTP-binding domains (By similarity).</text>
</comment>
<comment type="subcellular location">
    <subcellularLocation>
        <location>Cytoplasm</location>
    </subcellularLocation>
    <subcellularLocation>
        <location evidence="1">Chromosome</location>
        <location evidence="1">Centromere</location>
        <location evidence="1">Kinetochore</location>
    </subcellularLocation>
    <subcellularLocation>
        <location evidence="1">Cytoplasm</location>
        <location evidence="1">Cytoskeleton</location>
        <location evidence="1">Spindle</location>
    </subcellularLocation>
    <subcellularLocation>
        <location evidence="1">Cleavage furrow</location>
    </subcellularLocation>
    <subcellularLocation>
        <location evidence="1">Midbody</location>
    </subcellularLocation>
    <subcellularLocation>
        <location evidence="1">Cytoplasm</location>
        <location evidence="1">Cytoskeleton</location>
        <location evidence="1">Cilium axoneme</location>
    </subcellularLocation>
    <subcellularLocation>
        <location evidence="3">Cell projection</location>
        <location evidence="3">Cilium</location>
        <location evidence="3">Flagellum</location>
    </subcellularLocation>
    <text evidence="1 3">Distributed throughout the cytoplasm in prometaphase cells. Associated with the spindle during metaphase. Associated with the central spindle and at the cleavage furrow in anaphase cells. Detected at the midbody in telophase (By similarity). Associated with actin stress fibers. Found in the sperm annulus (By similarity).</text>
</comment>
<comment type="miscellaneous">
    <text evidence="1">Coordinated expression with SEPTIN2 and SEPTIN6.</text>
</comment>
<comment type="similarity">
    <text evidence="5">Belongs to the TRAFAC class TrmE-Era-EngA-EngB-Septin-like GTPase superfamily. Septin GTPase family.</text>
</comment>
<evidence type="ECO:0000250" key="1"/>
<evidence type="ECO:0000250" key="2">
    <source>
        <dbReference type="UniProtKB" id="O55131"/>
    </source>
</evidence>
<evidence type="ECO:0000250" key="3">
    <source>
        <dbReference type="UniProtKB" id="Q16181"/>
    </source>
</evidence>
<evidence type="ECO:0000255" key="4"/>
<evidence type="ECO:0000255" key="5">
    <source>
        <dbReference type="PROSITE-ProRule" id="PRU01056"/>
    </source>
</evidence>
<evidence type="ECO:0000256" key="6">
    <source>
        <dbReference type="SAM" id="MobiDB-lite"/>
    </source>
</evidence>
<gene>
    <name evidence="3" type="primary">SEPTIN7</name>
    <name type="synonym">CDC10</name>
    <name type="synonym">SEPT7</name>
</gene>
<accession>Q5R1W1</accession>
<name>SEPT7_PANTR</name>
<proteinExistence type="evidence at transcript level"/>
<reference key="1">
    <citation type="submission" date="2004-08" db="EMBL/GenBank/DDBJ databases">
        <authorList>
            <person name="Hirai M."/>
            <person name="Sakate R."/>
            <person name="Hida M."/>
            <person name="Sugano S."/>
            <person name="Hayasaka I."/>
            <person name="Suto Y."/>
            <person name="Osada N."/>
            <person name="Hashimoto K."/>
        </authorList>
    </citation>
    <scope>NUCLEOTIDE SEQUENCE [MRNA]</scope>
    <source>
        <tissue>Skin</tissue>
    </source>
</reference>
<sequence length="434" mass="50290">SARSAAAEERSVNSSTMVAQQKNLEGYVGFANLPNQVYRKSVKRGFEFTLMVVGESGLGKSTLINSLFLTDLYSPEYPGPSHRIKKTVQVEQSKVLIKEGGVQLLLTIVDTPGFGDAVDNSNCWQPVIDYIDSKFEDYLNAESRVNRRQMPDNRVQCCLYFIAPSGHGLKPLDIEFMKRLHEKVNIIPLIAKADTLTPEECQQFKKQIMKEIQEHKIKIYEFPETDDEEENKLVKKIKDRLPLAVVGSNTIIEVNGKRVRGRQYPWGVAEVENGEHCDFTILRNMLIRTHMQDLKDVTNNVHYENYRSRKLAAVTYNGVDNNKNKGQLTKSPLAQMEEERREHVAKMKKMEMEMEQVFEMKVKEKVQKLKDSEAELQRRHEQMKKNLEAQHKGLEEKRRQFEDEKANWEAQQRILEQQNSSRTLEKNKKKGKIF</sequence>
<protein>
    <recommendedName>
        <fullName>Septin-7</fullName>
    </recommendedName>
    <alternativeName>
        <fullName>CDC10 protein homolog</fullName>
    </alternativeName>
</protein>
<keyword id="KW-0007">Acetylation</keyword>
<keyword id="KW-0131">Cell cycle</keyword>
<keyword id="KW-0132">Cell division</keyword>
<keyword id="KW-0966">Cell projection</keyword>
<keyword id="KW-0137">Centromere</keyword>
<keyword id="KW-0158">Chromosome</keyword>
<keyword id="KW-0969">Cilium</keyword>
<keyword id="KW-0175">Coiled coil</keyword>
<keyword id="KW-0963">Cytoplasm</keyword>
<keyword id="KW-0206">Cytoskeleton</keyword>
<keyword id="KW-0221">Differentiation</keyword>
<keyword id="KW-0282">Flagellum</keyword>
<keyword id="KW-0342">GTP-binding</keyword>
<keyword id="KW-0995">Kinetochore</keyword>
<keyword id="KW-0498">Mitosis</keyword>
<keyword id="KW-0547">Nucleotide-binding</keyword>
<keyword id="KW-0597">Phosphoprotein</keyword>
<keyword id="KW-1185">Reference proteome</keyword>
<keyword id="KW-0744">Spermatogenesis</keyword>
<organism>
    <name type="scientific">Pan troglodytes</name>
    <name type="common">Chimpanzee</name>
    <dbReference type="NCBI Taxonomy" id="9598"/>
    <lineage>
        <taxon>Eukaryota</taxon>
        <taxon>Metazoa</taxon>
        <taxon>Chordata</taxon>
        <taxon>Craniata</taxon>
        <taxon>Vertebrata</taxon>
        <taxon>Euteleostomi</taxon>
        <taxon>Mammalia</taxon>
        <taxon>Eutheria</taxon>
        <taxon>Euarchontoglires</taxon>
        <taxon>Primates</taxon>
        <taxon>Haplorrhini</taxon>
        <taxon>Catarrhini</taxon>
        <taxon>Hominidae</taxon>
        <taxon>Pan</taxon>
    </lineage>
</organism>
<feature type="chain" id="PRO_0000173530" description="Septin-7">
    <location>
        <begin position="1" status="less than"/>
        <end position="434"/>
    </location>
</feature>
<feature type="domain" description="Septin-type G" evidence="5">
    <location>
        <begin position="44"/>
        <end position="313"/>
    </location>
</feature>
<feature type="region of interest" description="Interaction with SEPTIN12" evidence="3">
    <location>
        <begin position="44"/>
        <end position="314"/>
    </location>
</feature>
<feature type="region of interest" description="G1 motif" evidence="5">
    <location>
        <begin position="54"/>
        <end position="61"/>
    </location>
</feature>
<feature type="region of interest" description="G3 motif" evidence="5">
    <location>
        <begin position="110"/>
        <end position="113"/>
    </location>
</feature>
<feature type="region of interest" description="G4 motif" evidence="5">
    <location>
        <begin position="191"/>
        <end position="194"/>
    </location>
</feature>
<feature type="region of interest" description="Disordered" evidence="6">
    <location>
        <begin position="377"/>
        <end position="434"/>
    </location>
</feature>
<feature type="coiled-coil region" evidence="4">
    <location>
        <begin position="329"/>
        <end position="434"/>
    </location>
</feature>
<feature type="compositionally biased region" description="Basic and acidic residues" evidence="6">
    <location>
        <begin position="377"/>
        <end position="407"/>
    </location>
</feature>
<feature type="binding site" evidence="1">
    <location>
        <begin position="54"/>
        <end position="61"/>
    </location>
    <ligand>
        <name>GTP</name>
        <dbReference type="ChEBI" id="CHEBI:37565"/>
    </ligand>
</feature>
<feature type="binding site" evidence="1">
    <location>
        <position position="87"/>
    </location>
    <ligand>
        <name>GTP</name>
        <dbReference type="ChEBI" id="CHEBI:37565"/>
    </ligand>
</feature>
<feature type="binding site" evidence="1">
    <location>
        <position position="113"/>
    </location>
    <ligand>
        <name>GTP</name>
        <dbReference type="ChEBI" id="CHEBI:37565"/>
    </ligand>
</feature>
<feature type="binding site" evidence="1">
    <location>
        <begin position="192"/>
        <end position="200"/>
    </location>
    <ligand>
        <name>GTP</name>
        <dbReference type="ChEBI" id="CHEBI:37565"/>
    </ligand>
</feature>
<feature type="binding site" evidence="1">
    <location>
        <position position="247"/>
    </location>
    <ligand>
        <name>GTP</name>
        <dbReference type="ChEBI" id="CHEBI:37565"/>
    </ligand>
</feature>
<feature type="binding site" evidence="1">
    <location>
        <position position="262"/>
    </location>
    <ligand>
        <name>GTP</name>
        <dbReference type="ChEBI" id="CHEBI:37565"/>
    </ligand>
</feature>
<feature type="modified residue" description="Phosphotyrosine" evidence="2">
    <location>
        <position position="27"/>
    </location>
</feature>
<feature type="modified residue" description="Phosphoserine" evidence="2">
    <location>
        <position position="74"/>
    </location>
</feature>
<feature type="modified residue" description="Phosphothreonine" evidence="3">
    <location>
        <position position="225"/>
    </location>
</feature>
<feature type="modified residue" description="Phosphoserine" evidence="3">
    <location>
        <position position="331"/>
    </location>
</feature>
<feature type="modified residue" description="N6-acetyllysine" evidence="2">
    <location>
        <position position="370"/>
    </location>
</feature>
<feature type="modified residue" description="Phosphoserine" evidence="3">
    <location>
        <position position="421"/>
    </location>
</feature>
<feature type="modified residue" description="Phosphothreonine" evidence="3">
    <location>
        <position position="423"/>
    </location>
</feature>
<feature type="non-terminal residue">
    <location>
        <position position="1"/>
    </location>
</feature>